<reference evidence="30" key="1">
    <citation type="journal article" date="2013" name="Fish Shellfish Immunol.">
        <title>cDNA cloning and structural characterization of a lectin from the mussel Crenomytilus grayanus with a unique amino acid sequence and antibacterial activity.</title>
        <authorList>
            <person name="Kovalchuk S.N."/>
            <person name="Chikalovets I.V."/>
            <person name="Chernikov O.V."/>
            <person name="Molchanova V.I."/>
            <person name="Li W."/>
            <person name="Rasskazov V.A."/>
            <person name="Lukyanov P.A."/>
        </authorList>
    </citation>
    <scope>NUCLEOTIDE SEQUENCE [MRNA]</scope>
    <scope>PROTEIN SEQUENCE OF 14-20; 30-50; 68-84; 88-102; 106-110 AND 129-140</scope>
    <scope>FUNCTION</scope>
    <scope>ACTIVITY REGULATION</scope>
    <scope>CIRCULAR DICHROISM ANALYSIS</scope>
    <scope>PHYLOGENETIC ANALYSIS</scope>
</reference>
<reference key="2">
    <citation type="journal article" date="1998" name="Comp. Biochem. Physiol.">
        <title>Isolation and characterization of new GalNAc/Gal-specific lectin from the sea mussel Crenomytilus grayanus.</title>
        <authorList>
            <person name="Belogortseva N.I."/>
            <person name="Molchanova V.I."/>
            <person name="Kurika A.V."/>
            <person name="Skobun A.S."/>
            <person name="Glazkova V.E."/>
        </authorList>
    </citation>
    <scope>FUNCTION</scope>
    <scope>ACTIVITY REGULATION</scope>
    <scope>BIOPHYSICOCHEMICAL PROPERTIES</scope>
</reference>
<reference key="3">
    <citation type="journal article" date="2014" name="Chem. Nat. Comp.">
        <title>Domain organization of lectin from the mussel Crenomytilus grayanus.</title>
        <authorList>
            <person name="Chikalovets I.V."/>
            <person name="Molchanova V.I."/>
            <person name="Chernikov O.V."/>
            <person name="Lukyanov P.A."/>
        </authorList>
    </citation>
    <scope>FUNCTION</scope>
    <scope>ACTIVITY REGULATION</scope>
    <scope>SUBUNIT</scope>
    <scope>DOMAIN</scope>
</reference>
<reference key="4">
    <citation type="journal article" date="2015" name="Fish Shellfish Immunol.">
        <title>A lectin with antifungal activity from the mussel Crenomytilus grayanus.</title>
        <authorList>
            <person name="Chikalovets I.V."/>
            <person name="Chernikov O.V."/>
            <person name="Pivkin M.V."/>
            <person name="Molchanova V.I."/>
            <person name="Litovchenko A.P."/>
            <person name="Li W."/>
            <person name="Lukyanov P.A."/>
        </authorList>
    </citation>
    <scope>FUNCTION</scope>
    <scope>ACTIVITY REGULATION</scope>
    <scope>TISSUE SPECIFICITY</scope>
    <scope>INDUCTION</scope>
</reference>
<reference key="5">
    <citation type="journal article" date="2015" name="Fish Shellfish Immunol.">
        <title>Carbohydrate-binding motifs in a novel type lectin from the sea mussel Crenomytilus grayanus: Homology modeling study and site-specific mutagenesis.</title>
        <authorList>
            <person name="Kovalchuk S.N."/>
            <person name="Golotin V.A."/>
            <person name="Balabanova L.A."/>
            <person name="Buinovskaya N.S."/>
            <person name="Likhatskaya G.N."/>
            <person name="Rasskazov V.A."/>
        </authorList>
    </citation>
    <scope>FUNCTION</scope>
    <scope>ACTIVITY REGULATION</scope>
    <scope>MUTAGENESIS OF HIS-16; PRO-17; GLY-19; HIS-64; PRO-65; GLY-67; HIS-108; PRO-109 AND GLY-111</scope>
    <scope>3D-STRUCTURE MODELING</scope>
</reference>
<reference key="6">
    <citation type="journal article" date="2017" name="Int. J. Biol. Macromol.">
        <title>Lectin CGL from the sea mussel Crenomytilus grayanus induces Burkitt's lymphoma cells death via interaction with surface glycan.</title>
        <authorList>
            <person name="Chernikov O."/>
            <person name="Kuzmich A."/>
            <person name="Chikalovets I."/>
            <person name="Molchanova V."/>
            <person name="Hua K.F."/>
        </authorList>
    </citation>
    <scope>FUNCTION</scope>
    <scope>ACTIVITY REGULATION</scope>
    <scope>BIOTECHNOLOGY</scope>
</reference>
<reference key="7">
    <citation type="journal article" date="2017" name="Sci. Rep.">
        <title>A GalNAc/Gal-specific lectin from the sea mussel Crenomytilus grayanus modulates immune response in macrophages and in mice.</title>
        <authorList>
            <person name="Chernikov O.V."/>
            <person name="Wong W.T."/>
            <person name="Li L.H."/>
            <person name="Chikalovets I.V."/>
            <person name="Molchanova V.I."/>
            <person name="Wu S.H."/>
            <person name="Liao J.H."/>
            <person name="Hua K.F."/>
        </authorList>
    </citation>
    <scope>FUNCTION</scope>
    <scope>BIOTECHNOLOGY</scope>
</reference>
<reference key="8">
    <citation type="journal article" date="2018" name="Mar. Drugs">
        <title>Mutagenesis Studies and Structure-function Relationships for GalNAc/Gal-Specific Lectin from the Sea Mussel Crenomytilus grayanus.</title>
        <authorList>
            <person name="Kovalchuk S.N."/>
            <person name="Buinovskaya N.S."/>
            <person name="Likhatskaya G.N."/>
            <person name="Rasskazov V.A."/>
            <person name="Son O.M."/>
            <person name="Tekutyeva L.A."/>
            <person name="Balabanova L.A."/>
        </authorList>
    </citation>
    <scope>FUNCTION</scope>
    <scope>BIOTECHNOLOGY</scope>
    <scope>MUTAGENESIS OF ASN-27; HIS-37; GLU-75; HIS-85; ASN-119; ASP-127 AND HIS-129</scope>
    <scope>IN SILICO ANALYSIS OF BINDING TO GALACTOSE; GLOBOTRIOSE GB3 AND PORCINE STOMACH MUCIN TRISACCHARIDE</scope>
    <scope>3D-STRUCTURE MODELING OF THE LIGAND BINDING SITE IN COMPLEX WITH GLOBOTRIOSE GB3 AND PORCINE STOMACH MUCIN TRISACCHARIDE</scope>
</reference>
<reference key="9">
    <citation type="journal article" date="2019" name="Molecules">
        <title>Activity Dependence of a Novel Lectin Family on Structure and Carbohydrate-Binding Properties.</title>
        <authorList>
            <person name="Chikalovets I."/>
            <person name="Filshtein A."/>
            <person name="Molchanova V."/>
            <person name="Mizgina T."/>
            <person name="Lukyanov P."/>
            <person name="Nedashkovskaya O."/>
            <person name="Hua K.F."/>
            <person name="Chernikov O."/>
        </authorList>
    </citation>
    <scope>FUNCTION</scope>
    <scope>BIOTECHNOLOGY</scope>
    <scope>REVIEW</scope>
</reference>
<reference evidence="31" key="10">
    <citation type="journal article" date="2015" name="Acta Crystallogr. F Struct. Biol. Commun.">
        <title>Structure of a lectin from the sea mussel Crenomytilus grayanus (CGL).</title>
        <authorList>
            <person name="Jakob M."/>
            <person name="Lubkowski J."/>
            <person name="O'Keefe B.R."/>
            <person name="Wlodawer A."/>
        </authorList>
    </citation>
    <scope>X-RAY CRYSTALLOGRAPHY (2.12 ANGSTROMS)</scope>
    <scope>SUBUNIT</scope>
</reference>
<reference evidence="32 33 34 35" key="11">
    <citation type="journal article" date="2016" name="J. Am. Chem. Soc.">
        <title>A Multivalent Marine Lectin from Crenomytilus grayanus Possesses Anti-cancer Activity through Recognizing Globotriose Gb3.</title>
        <authorList>
            <person name="Liao J.H."/>
            <person name="Chien C.T."/>
            <person name="Wu H.Y."/>
            <person name="Huang K.F."/>
            <person name="Wang I."/>
            <person name="Ho M.R."/>
            <person name="Tu I.F."/>
            <person name="Lee I.M."/>
            <person name="Li W."/>
            <person name="Shih Y.L."/>
            <person name="Wu C.Y."/>
            <person name="Lukyanov P.A."/>
            <person name="Hsu S.T."/>
            <person name="Wu S.H."/>
        </authorList>
    </citation>
    <scope>X-RAY CRYSTALLOGRAPHY (1.08 ANGSTROMS) AND IN COMPLEX WITH GALACTOSE; GALACTOSAMINE AND GLOBOTRIOSE GB3</scope>
    <scope>FUNCTION</scope>
    <scope>SUBUNIT</scope>
    <scope>BIOTECHNOLOGY</scope>
    <scope>NMR SPECTROSCOPY</scope>
    <scope>PHYLOGENETIC ANALYSIS</scope>
</reference>
<proteinExistence type="evidence at protein level"/>
<feature type="chain" id="PRO_0000453467" description="Galactose-binding lectin">
    <location>
        <begin position="1"/>
        <end position="150"/>
    </location>
</feature>
<feature type="binding site" evidence="6 33">
    <location>
        <position position="16"/>
    </location>
    <ligand>
        <name>D-galactose</name>
        <dbReference type="ChEBI" id="CHEBI:4139"/>
        <label>1</label>
    </ligand>
</feature>
<feature type="binding site" evidence="6 33">
    <location>
        <position position="19"/>
    </location>
    <ligand>
        <name>D-galactose</name>
        <dbReference type="ChEBI" id="CHEBI:4139"/>
        <label>1</label>
    </ligand>
</feature>
<feature type="binding site" evidence="6 35">
    <location>
        <position position="27"/>
    </location>
    <ligand>
        <name>D-galactose</name>
        <dbReference type="ChEBI" id="CHEBI:4139"/>
        <label>2</label>
    </ligand>
</feature>
<feature type="binding site" evidence="6 33">
    <location>
        <begin position="35"/>
        <end position="37"/>
    </location>
    <ligand>
        <name>D-galactose</name>
        <dbReference type="ChEBI" id="CHEBI:4139"/>
        <label>1</label>
    </ligand>
</feature>
<feature type="binding site" evidence="6 33">
    <location>
        <position position="64"/>
    </location>
    <ligand>
        <name>D-galactose</name>
        <dbReference type="ChEBI" id="CHEBI:4139"/>
        <label>2</label>
    </ligand>
</feature>
<feature type="binding site" evidence="6 33">
    <location>
        <position position="67"/>
    </location>
    <ligand>
        <name>D-galactose</name>
        <dbReference type="ChEBI" id="CHEBI:4139"/>
        <label>2</label>
    </ligand>
</feature>
<feature type="binding site" evidence="6 33">
    <location>
        <position position="75"/>
    </location>
    <ligand>
        <name>D-galactose</name>
        <dbReference type="ChEBI" id="CHEBI:4139"/>
        <label>3</label>
    </ligand>
</feature>
<feature type="binding site" evidence="6 33">
    <location>
        <begin position="83"/>
        <end position="85"/>
    </location>
    <ligand>
        <name>D-galactose</name>
        <dbReference type="ChEBI" id="CHEBI:4139"/>
        <label>2</label>
    </ligand>
</feature>
<feature type="binding site" evidence="6 33">
    <location>
        <position position="108"/>
    </location>
    <ligand>
        <name>D-galactose</name>
        <dbReference type="ChEBI" id="CHEBI:4139"/>
        <label>3</label>
    </ligand>
</feature>
<feature type="binding site" evidence="33">
    <location>
        <position position="111"/>
    </location>
    <ligand>
        <name>D-galactose</name>
        <dbReference type="ChEBI" id="CHEBI:4139"/>
        <label>3</label>
    </ligand>
</feature>
<feature type="binding site" evidence="6 35">
    <location>
        <position position="119"/>
    </location>
    <ligand>
        <name>D-galactose</name>
        <dbReference type="ChEBI" id="CHEBI:4139"/>
        <label>1</label>
    </ligand>
</feature>
<feature type="binding site" evidence="6 33">
    <location>
        <begin position="127"/>
        <end position="129"/>
    </location>
    <ligand>
        <name>D-galactose</name>
        <dbReference type="ChEBI" id="CHEBI:4139"/>
        <label>3</label>
    </ligand>
</feature>
<feature type="glycosylation site" description="N-linked (GlcNAc...) asparagine" evidence="1">
    <location>
        <position position="26"/>
    </location>
</feature>
<feature type="glycosylation site" description="N-linked (GlcNAc...) asparagine" evidence="1">
    <location>
        <position position="74"/>
    </location>
</feature>
<feature type="glycosylation site" description="N-linked (GlcNAc...) asparagine" evidence="1">
    <location>
        <position position="118"/>
    </location>
</feature>
<feature type="mutagenesis site" description="Loss of hemagglutinating and porcine stomach mucin-binding activities; when associated with A-17 and A-19." evidence="4">
    <original>H</original>
    <variation>A</variation>
    <location>
        <position position="16"/>
    </location>
</feature>
<feature type="mutagenesis site" description="Loss of hemagglutinating and porcine stomach mucin-binding activities; when associated with A-16 and A-19." evidence="4">
    <original>P</original>
    <variation>A</variation>
    <location>
        <position position="17"/>
    </location>
</feature>
<feature type="mutagenesis site" description="Loss of hemagglutinating and porcine stomach mucin-binding activities; when associated with A-16 and A-17." evidence="4">
    <original>G</original>
    <variation>A</variation>
    <location>
        <position position="19"/>
    </location>
</feature>
<feature type="mutagenesis site" description="5.9-fold decreased porcine stomach mucin-binding activity compared to wild-type." evidence="9">
    <original>N</original>
    <variation>A</variation>
    <location>
        <position position="27"/>
    </location>
</feature>
<feature type="mutagenesis site" description="1.4-fold decreased porcine stomach mucin-binding activity compared to wild-type." evidence="9">
    <original>H</original>
    <variation>A</variation>
    <location>
        <position position="37"/>
    </location>
</feature>
<feature type="mutagenesis site" description="Loss of hemagglutinating and porcine stomach mucin-binding activities; when associated with A-65 and A-67." evidence="4">
    <original>H</original>
    <variation>A</variation>
    <location>
        <position position="64"/>
    </location>
</feature>
<feature type="mutagenesis site" description="Loss of hemagglutinating and porcine stomach mucin-binding activities; when associated with A-64 and A-67." evidence="4">
    <original>P</original>
    <variation>A</variation>
    <location>
        <position position="65"/>
    </location>
</feature>
<feature type="mutagenesis site" description="Loss of hemagglutinating and porcine stomach mucin-binding activities; when associated with A-64 and A-65." evidence="4">
    <original>G</original>
    <variation>A</variation>
    <location>
        <position position="67"/>
    </location>
</feature>
<feature type="mutagenesis site" description="3.2-fold decreased porcine stomach mucin-binding activity compared to wild-type." evidence="9">
    <original>E</original>
    <variation>A</variation>
    <location>
        <position position="75"/>
    </location>
</feature>
<feature type="mutagenesis site" description="5.0-fold decreased porcine stomach mucin-binding activity compared to wild-type." evidence="9">
    <original>H</original>
    <variation>A</variation>
    <location>
        <position position="85"/>
    </location>
</feature>
<feature type="mutagenesis site" description="Retains slight hemagglutinating activity and has 6-fold decreased porcine stomach mucin-binding activity; when associated with A-109 and A-111." evidence="4">
    <original>H</original>
    <variation>A</variation>
    <location>
        <position position="108"/>
    </location>
</feature>
<feature type="mutagenesis site" description="Retains slight hemagglutinating activity and has 6-fold decreased porcine stomach mucin-binding activity; when associated with A-108 and A-111." evidence="4">
    <original>P</original>
    <variation>A</variation>
    <location>
        <position position="109"/>
    </location>
</feature>
<feature type="mutagenesis site" description="Retains slight hemagglutinating activity and has 6-fold decreased porcine stomach mucin-binding activity; when associated with A-108 and A-109." evidence="4">
    <original>G</original>
    <variation>A</variation>
    <location>
        <position position="111"/>
    </location>
</feature>
<feature type="mutagenesis site" description="11.1-fold decreased porcine stomach mucin-binding activity compared to wild-type." evidence="9">
    <original>N</original>
    <variation>A</variation>
    <location>
        <position position="119"/>
    </location>
</feature>
<feature type="mutagenesis site" description="4.5-fold decreased porcine stomach mucin-binding activity compared to wild-type." evidence="9">
    <original>D</original>
    <variation>A</variation>
    <location>
        <position position="127"/>
    </location>
</feature>
<feature type="mutagenesis site" description="2.3-fold decreased porcine stomach mucin-binding activity compared to wild-type." evidence="9">
    <original>H</original>
    <variation>A</variation>
    <location>
        <position position="129"/>
    </location>
</feature>
<feature type="strand" evidence="36">
    <location>
        <begin position="4"/>
        <end position="8"/>
    </location>
</feature>
<feature type="turn" evidence="36">
    <location>
        <begin position="9"/>
        <end position="11"/>
    </location>
</feature>
<feature type="strand" evidence="36">
    <location>
        <begin position="14"/>
        <end position="17"/>
    </location>
</feature>
<feature type="strand" evidence="36">
    <location>
        <begin position="28"/>
        <end position="34"/>
    </location>
</feature>
<feature type="helix" evidence="36">
    <location>
        <begin position="38"/>
        <end position="40"/>
    </location>
</feature>
<feature type="strand" evidence="36">
    <location>
        <begin position="42"/>
        <end position="48"/>
    </location>
</feature>
<feature type="strand" evidence="36">
    <location>
        <begin position="51"/>
        <end position="56"/>
    </location>
</feature>
<feature type="turn" evidence="36">
    <location>
        <begin position="57"/>
        <end position="59"/>
    </location>
</feature>
<feature type="strand" evidence="36">
    <location>
        <begin position="62"/>
        <end position="65"/>
    </location>
</feature>
<feature type="strand" evidence="36">
    <location>
        <begin position="77"/>
        <end position="82"/>
    </location>
</feature>
<feature type="helix" evidence="36">
    <location>
        <begin position="86"/>
        <end position="88"/>
    </location>
</feature>
<feature type="strand" evidence="36">
    <location>
        <begin position="90"/>
        <end position="93"/>
    </location>
</feature>
<feature type="turn" evidence="36">
    <location>
        <begin position="94"/>
        <end position="97"/>
    </location>
</feature>
<feature type="strand" evidence="36">
    <location>
        <begin position="98"/>
        <end position="101"/>
    </location>
</feature>
<feature type="strand" evidence="36">
    <location>
        <begin position="106"/>
        <end position="109"/>
    </location>
</feature>
<feature type="strand" evidence="36">
    <location>
        <begin position="120"/>
        <end position="125"/>
    </location>
</feature>
<feature type="helix" evidence="36">
    <location>
        <begin position="130"/>
        <end position="132"/>
    </location>
</feature>
<feature type="strand" evidence="36">
    <location>
        <begin position="134"/>
        <end position="138"/>
    </location>
</feature>
<feature type="strand" evidence="36">
    <location>
        <begin position="141"/>
        <end position="145"/>
    </location>
</feature>
<name>LEC_CREGR</name>
<organism>
    <name type="scientific">Crenomytilus grayanus</name>
    <name type="common">Gray mussel</name>
    <name type="synonym">Mytilus grayanus</name>
    <dbReference type="NCBI Taxonomy" id="151218"/>
    <lineage>
        <taxon>Eukaryota</taxon>
        <taxon>Metazoa</taxon>
        <taxon>Spiralia</taxon>
        <taxon>Lophotrochozoa</taxon>
        <taxon>Mollusca</taxon>
        <taxon>Bivalvia</taxon>
        <taxon>Autobranchia</taxon>
        <taxon>Pteriomorphia</taxon>
        <taxon>Mytilida</taxon>
        <taxon>Mytiloidea</taxon>
        <taxon>Mytilidae</taxon>
        <taxon>Mytilinae</taxon>
        <taxon>Crenomytilus</taxon>
    </lineage>
</organism>
<dbReference type="EMBL" id="JQ314213">
    <property type="protein sequence ID" value="AEY80387.1"/>
    <property type="molecule type" value="mRNA"/>
</dbReference>
<dbReference type="PDB" id="5DUY">
    <property type="method" value="X-ray"/>
    <property type="resolution" value="2.12 A"/>
    <property type="chains" value="A/B/C/D/E/F=1-150"/>
</dbReference>
<dbReference type="PDB" id="5F8S">
    <property type="method" value="X-ray"/>
    <property type="resolution" value="1.08 A"/>
    <property type="chains" value="A/B=1-150"/>
</dbReference>
<dbReference type="PDB" id="5F8W">
    <property type="method" value="X-ray"/>
    <property type="resolution" value="1.56 A"/>
    <property type="chains" value="A/B=1-150"/>
</dbReference>
<dbReference type="PDB" id="5F8Y">
    <property type="method" value="X-ray"/>
    <property type="resolution" value="1.70 A"/>
    <property type="chains" value="A/B=1-150"/>
</dbReference>
<dbReference type="PDB" id="5F90">
    <property type="method" value="X-ray"/>
    <property type="resolution" value="1.64 A"/>
    <property type="chains" value="A/B=1-150"/>
</dbReference>
<dbReference type="PDBsum" id="5DUY"/>
<dbReference type="PDBsum" id="5F8S"/>
<dbReference type="PDBsum" id="5F8W"/>
<dbReference type="PDBsum" id="5F8Y"/>
<dbReference type="PDBsum" id="5F90"/>
<dbReference type="SMR" id="H2FH31"/>
<dbReference type="UniLectin" id="H2FH31"/>
<dbReference type="EvolutionaryTrace" id="H2FH31"/>
<dbReference type="GO" id="GO:0030246">
    <property type="term" value="F:carbohydrate binding"/>
    <property type="evidence" value="ECO:0007669"/>
    <property type="project" value="UniProtKB-KW"/>
</dbReference>
<dbReference type="CDD" id="cd23417">
    <property type="entry name" value="beta-trefoil_Ricin_MytiLec-like"/>
    <property type="match status" value="1"/>
</dbReference>
<dbReference type="Gene3D" id="2.80.10.50">
    <property type="match status" value="1"/>
</dbReference>
<sequence length="150" mass="17023">MTTFLIKHKASGKFLHPYGGSSNPANNTKLVLHSDIHERMYFQFDVVDERWGYIKHVASGKIVHPYGGQANPPNETNMVLHQDRHDRALFAMDFFNDNIMHKGGKYIHPKGGSPNPPNNTETVIHGDKHAAMEFIFVSPKNKDKRVLVYA</sequence>
<evidence type="ECO:0000255" key="1">
    <source>
        <dbReference type="PROSITE-ProRule" id="PRU00498"/>
    </source>
</evidence>
<evidence type="ECO:0000269" key="2">
    <source>
    </source>
</evidence>
<evidence type="ECO:0000269" key="3">
    <source>
    </source>
</evidence>
<evidence type="ECO:0000269" key="4">
    <source>
    </source>
</evidence>
<evidence type="ECO:0000269" key="5">
    <source>
    </source>
</evidence>
<evidence type="ECO:0000269" key="6">
    <source>
    </source>
</evidence>
<evidence type="ECO:0000269" key="7">
    <source>
    </source>
</evidence>
<evidence type="ECO:0000269" key="8">
    <source>
    </source>
</evidence>
<evidence type="ECO:0000269" key="9">
    <source>
    </source>
</evidence>
<evidence type="ECO:0000269" key="10">
    <source>
    </source>
</evidence>
<evidence type="ECO:0000269" key="11">
    <source>
    </source>
</evidence>
<evidence type="ECO:0000269" key="12">
    <source ref="3"/>
</evidence>
<evidence type="ECO:0000303" key="13">
    <source>
    </source>
</evidence>
<evidence type="ECO:0000303" key="14">
    <source>
    </source>
</evidence>
<evidence type="ECO:0000303" key="15">
    <source>
    </source>
</evidence>
<evidence type="ECO:0000303" key="16">
    <source>
    </source>
</evidence>
<evidence type="ECO:0000303" key="17">
    <source>
    </source>
</evidence>
<evidence type="ECO:0000303" key="18">
    <source>
    </source>
</evidence>
<evidence type="ECO:0000303" key="19">
    <source>
    </source>
</evidence>
<evidence type="ECO:0000303" key="20">
    <source>
    </source>
</evidence>
<evidence type="ECO:0000303" key="21">
    <source>
    </source>
</evidence>
<evidence type="ECO:0000303" key="22">
    <source>
    </source>
</evidence>
<evidence type="ECO:0000303" key="23">
    <source ref="3"/>
</evidence>
<evidence type="ECO:0000305" key="24">
    <source>
    </source>
</evidence>
<evidence type="ECO:0000305" key="25">
    <source>
    </source>
</evidence>
<evidence type="ECO:0000305" key="26">
    <source>
    </source>
</evidence>
<evidence type="ECO:0000305" key="27">
    <source>
    </source>
</evidence>
<evidence type="ECO:0000305" key="28">
    <source>
    </source>
</evidence>
<evidence type="ECO:0000305" key="29">
    <source ref="3"/>
</evidence>
<evidence type="ECO:0000312" key="30">
    <source>
        <dbReference type="EMBL" id="AEY80387.1"/>
    </source>
</evidence>
<evidence type="ECO:0007744" key="31">
    <source>
        <dbReference type="PDB" id="5DUY"/>
    </source>
</evidence>
<evidence type="ECO:0007744" key="32">
    <source>
        <dbReference type="PDB" id="5F8S"/>
    </source>
</evidence>
<evidence type="ECO:0007744" key="33">
    <source>
        <dbReference type="PDB" id="5F8W"/>
    </source>
</evidence>
<evidence type="ECO:0007744" key="34">
    <source>
        <dbReference type="PDB" id="5F8Y"/>
    </source>
</evidence>
<evidence type="ECO:0007744" key="35">
    <source>
        <dbReference type="PDB" id="5F90"/>
    </source>
</evidence>
<evidence type="ECO:0007829" key="36">
    <source>
        <dbReference type="PDB" id="5F8S"/>
    </source>
</evidence>
<accession>H2FH31</accession>
<keyword id="KW-0002">3D-structure</keyword>
<keyword id="KW-0903">Direct protein sequencing</keyword>
<keyword id="KW-0325">Glycoprotein</keyword>
<keyword id="KW-0348">Hemagglutinin</keyword>
<keyword id="KW-0430">Lectin</keyword>
<protein>
    <recommendedName>
        <fullName evidence="17 19">Galactose-binding lectin</fullName>
    </recommendedName>
    <alternativeName>
        <fullName evidence="16 17 18 19 20 21 23">CGL</fullName>
    </alternativeName>
    <alternativeName>
        <fullName evidence="13 14 15 19 20 21 22">GalNAc/Gal-specific lectin</fullName>
    </alternativeName>
</protein>
<comment type="function">
    <text evidence="2 3 4 6 7 8 9 10 11 12">Galactose-binding lectin (PubMed:23886951, PubMed:27010847, PubMed:28636877, PubMed:9568372). Binds both alpha and beta anomer of galactose (Gal), but has a stronger interaction with the glycans having alpha Gal at the non-reducing end and binds beta Gal weakly only in highly branched glycans. Has high affinity to Galalpha1-4Galbeta1-4GlcNAc (PubMed:28636877). Binds N-acetyl-2-deoxy-2-amino-galactose (2-deoxy-GalNAc) (PubMed:23886951, PubMed:9568372). Binds N-acetylgalactosamine (GalNAc) (PubMed:26439416). Binds porcine stomach mucin (PSM) with high affinity (PubMed:26439416, PubMed:30486373). Binds galactosamine (PubMed:27010847). Binds laminin, bovine submaxillary mucin (BSM), fibronectin, type I collagen and gelatin with a decreasing affinity, respectively (Ref.3). Has hemagglutinating activity towards human type A erythrocytes (PubMed:26439416, PubMed:9568372, Ref.3). Also hemagglutinates human type 0, B and AB erythrocytes as well as rabbit and mouse erythrocytes (PubMed:9568372). Agglutinates both Gram-positive and Gram-negative bacteria including B.subtilis ATCC 6633, S.aureus ATCC 21027 and E.coli 3254, respectively. No agglutination activity towards Gram-positive S.amurskyense CMM 3673. Has bacteriostatic activity on S.amurskyense CMM 3673, B.subtilis ATCC 6633, S.aureus ATCC 21027 and E.coli 3254. However, has no agglutination nor bacteriostatic activity on Gram-negative C.scophthalmum CIP 104199 or A.troitsensis KMM 3674 (PubMed:23886951). Inhibits growth of fungi from the genera Aspergillus, Penicillium, Trichoderma and st. Mycelia. Inhibits germination of spores and hyphal growth of them (PubMed:25482060). Has dose-dependent cytotoxic effect on the human globotriaosylceramide (Gb3)-expressing Burkitt's lymphoma (Raji) cell line. Binds to Gb3 in these cells leading to activation of caspase-9/3 and PARP (PubMed:28636877). Has dose-dependent cytotoxic effect on the Gb3-expressing human MCF-7 breast cancer cell line (PubMed:27010847). No cytotoxic effect on myelogenous leukemia K562 cell line, which does not express Gb3 (PubMed:28636877). Activates immune responses in mice and increases cytokine production of TNF-alpha, IL-6 and MCP-1 in the serum and the peritoneal lavage of mice. Induces TNF-alpha and IL-6 secretion in mouse RAW264.7 macrophages, mouse bone marrow-derived macrophages, human THP-1 macrophages, human peripheral blood mononuclear cells (PBMCs) and human blood monocyte-derived macrophages. TNF-alpha production in macrophages could not be inhibited by GalNAc, GalN or Gal, indicating that induced cytokine production is separate from its sugar binding activity. Increases intracellular reactive oxygen species levels, expression and phosphorylation of protein kinases PKC alpha/delta, expression of COX-2 and NF-kappaB, and activates the MAPK pathway by increasing the phosphorylation of ERK1/2, JNK1/2 and p38 in mouse RAW264.7 macrophages. Induces endotoxin tolerance in lipopolysaccharide(LPS)-activated macrophages by down-regulating IRAK2 expression, reducing JNK1/2 phosphorylation and NF-kappaB activation. Can slightly increase the bactericidal activity of RAW264.7 macrophages (PubMed:28740170). Has DNA-binding activity (PubMed:27010847). Recognizes pathogen-associated molecular patterns (PAMPs) and binds to LPS from E.coli, but has only little binding to beta-1,3-glucan from E.gracilis and peptidoglycan from S.aureus. Activates secretion of TNF-alpha and IFN-gamma by the human peripheral blood cells (HPBCs) (PubMed:31905927). May be involved in innate immunity acting as an antibacterial and antifungal agent involved in the recognition and clearance of pathogens (PubMed:23886951, PubMed:25482060, PubMed:31905927).</text>
</comment>
<comment type="activity regulation">
    <text evidence="2 3 4 7 11 12">Bacterial binding activity is inhibited by D-galactose (PubMed:23886951). Hemagglutinating activity is independent of divalent cations Ca2(+) or Mg2(+). It is strongly inhibited by N-acetyl-D-galactosamine (GalNAc), D-galactose and D-talose, and to a lesser extent by melibiose and raffinose. Also inhibited by glycoprotein asialo-bovine submaxillary mucin (BSM). Not inhibited by D-glucose, D-fucose, D-galactitol, N-acetyl-D-glucosamine or lactose (PubMed:26439416, PubMed:9568372). Fungal binding activity is inhibited by D-galactose (PubMed:25482060). Cytotoxic activity against Raji cell line is completely inhibited by galactose, melibiose and raffinose, but not by glucose or lactose (PubMed:28636877). Galactose inhibits binding to laminin and BSM, but not to collagen, gelatin or fibronectin (Ref.3).</text>
</comment>
<comment type="biophysicochemical properties">
    <phDependence>
        <text evidence="11">Optimum pH is between 8-10 for the hemagglutinating activity of the human erythrocytes.</text>
    </phDependence>
    <temperatureDependence>
        <text evidence="11">Hemagglutinating activity of the human erythrocytes is fully maintained after heating at 50 degrees Celsius for 3 hours. The activity is partially lost after heating at 55 degrees Celsius and completely lost after heating at 65 degrees Celsius for 30 minutes.</text>
    </temperatureDependence>
</comment>
<comment type="subunit">
    <text evidence="5 6 12">Monomer in solution (PubMed:26527272). Homodimer in solution (PubMed:27010847). Exists as a monomer in solution when a low concentration (0.001 mg/ml) of it is present. Homodimers start to appear at a concentration of 0.01 mg/ml and tetramers at a concentration of 0.1 mg/ml (Ref.3).</text>
</comment>
<comment type="tissue specificity">
    <text evidence="3">Highly expressed in mantle and to a lesser extent in muscle, hepatopancreas, gill and hemocytes.</text>
</comment>
<comment type="induction">
    <text evidence="3">Up-regulated in mantle by challenge of yeast P.pastoris reaching the maximum level at 12 hours post challenge and recovering to the original level at 24 hours post challenge.</text>
</comment>
<comment type="domain">
    <text evidence="12">Contains a collagen like domain, which probably promotes oligomerization.</text>
</comment>
<comment type="biotechnology">
    <text evidence="24 25 26 27 28">This protein may have potential in cancer diagnosis and treatment (PubMed:27010847, PubMed:28636877, PubMed:30486373, PubMed:31905927). A synthetic analog of this protein with enhanced carbohydrate-binding properties may be designed for the purpose of constructing a biosensor for cancer diagnostics or anticancer therapy (PubMed:30486373). May potentially be used as an immune modulator in mammals, because of its effects on macrophages and its ability to promote secretion of cytokines (PubMed:28740170).</text>
</comment>
<comment type="miscellaneous">
    <text evidence="29">Cleavage of the collagen like domain may decrease the agglutinating ability and alter carbohydrate-binding properties. The function of this protein could potentially be regulated by proteolysis in vivo.</text>
</comment>